<evidence type="ECO:0000255" key="1">
    <source>
        <dbReference type="HAMAP-Rule" id="MF_00034"/>
    </source>
</evidence>
<reference key="1">
    <citation type="journal article" date="2004" name="Proc. Natl. Acad. Sci. U.S.A.">
        <title>The louse-borne human pathogen Bartonella quintana is a genomic derivative of the zoonotic agent Bartonella henselae.</title>
        <authorList>
            <person name="Alsmark U.C.M."/>
            <person name="Frank A.C."/>
            <person name="Karlberg E.O."/>
            <person name="Legault B.-A."/>
            <person name="Ardell D.H."/>
            <person name="Canbaeck B."/>
            <person name="Eriksson A.-S."/>
            <person name="Naeslund A.K."/>
            <person name="Handley S.A."/>
            <person name="Huvet M."/>
            <person name="La Scola B."/>
            <person name="Holmberg M."/>
            <person name="Andersson S.G.E."/>
        </authorList>
    </citation>
    <scope>NUCLEOTIDE SEQUENCE [LARGE SCALE GENOMIC DNA]</scope>
    <source>
        <strain>Toulouse</strain>
    </source>
</reference>
<sequence>MAETIRIIGIDPGLRRTGWGVIDFSGNRLQFVAAGTLSSDARCDLASRLCQLYKGLSDILHQFMPHEAAVEHVFVNKDATATLKLGQARAIALLAPAQANLPVFEYAPNKVKKSVIGVGHGAKEQIHMMVKVLLPRAEFDSSDAADALALALCHSTHRTSASHYARITA</sequence>
<name>RUVC_BARQU</name>
<organism>
    <name type="scientific">Bartonella quintana (strain Toulouse)</name>
    <name type="common">Rochalimaea quintana</name>
    <dbReference type="NCBI Taxonomy" id="283165"/>
    <lineage>
        <taxon>Bacteria</taxon>
        <taxon>Pseudomonadati</taxon>
        <taxon>Pseudomonadota</taxon>
        <taxon>Alphaproteobacteria</taxon>
        <taxon>Hyphomicrobiales</taxon>
        <taxon>Bartonellaceae</taxon>
        <taxon>Bartonella</taxon>
    </lineage>
</organism>
<gene>
    <name evidence="1" type="primary">ruvC</name>
    <name type="ordered locus">BQ11890</name>
</gene>
<comment type="function">
    <text evidence="1">The RuvA-RuvB-RuvC complex processes Holliday junction (HJ) DNA during genetic recombination and DNA repair. Endonuclease that resolves HJ intermediates. Cleaves cruciform DNA by making single-stranded nicks across the HJ at symmetrical positions within the homologous arms, yielding a 5'-phosphate and a 3'-hydroxyl group; requires a central core of homology in the junction. The consensus cleavage sequence is 5'-(A/T)TT(C/G)-3'. Cleavage occurs on the 3'-side of the TT dinucleotide at the point of strand exchange. HJ branch migration catalyzed by RuvA-RuvB allows RuvC to scan DNA until it finds its consensus sequence, where it cleaves and resolves the cruciform DNA.</text>
</comment>
<comment type="catalytic activity">
    <reaction evidence="1">
        <text>Endonucleolytic cleavage at a junction such as a reciprocal single-stranded crossover between two homologous DNA duplexes (Holliday junction).</text>
        <dbReference type="EC" id="3.1.21.10"/>
    </reaction>
</comment>
<comment type="cofactor">
    <cofactor evidence="1">
        <name>Mg(2+)</name>
        <dbReference type="ChEBI" id="CHEBI:18420"/>
    </cofactor>
    <text evidence="1">Binds 2 Mg(2+) ion per subunit.</text>
</comment>
<comment type="subunit">
    <text evidence="1">Homodimer which binds Holliday junction (HJ) DNA. The HJ becomes 2-fold symmetrical on binding to RuvC with unstacked arms; it has a different conformation from HJ DNA in complex with RuvA. In the full resolvosome a probable DNA-RuvA(4)-RuvB(12)-RuvC(2) complex forms which resolves the HJ.</text>
</comment>
<comment type="subcellular location">
    <subcellularLocation>
        <location evidence="1">Cytoplasm</location>
    </subcellularLocation>
</comment>
<comment type="similarity">
    <text evidence="1">Belongs to the RuvC family.</text>
</comment>
<feature type="chain" id="PRO_0000225122" description="Crossover junction endodeoxyribonuclease RuvC">
    <location>
        <begin position="1"/>
        <end position="169"/>
    </location>
</feature>
<feature type="active site" evidence="1">
    <location>
        <position position="11"/>
    </location>
</feature>
<feature type="active site" evidence="1">
    <location>
        <position position="71"/>
    </location>
</feature>
<feature type="active site" evidence="1">
    <location>
        <position position="143"/>
    </location>
</feature>
<feature type="binding site" evidence="1">
    <location>
        <position position="11"/>
    </location>
    <ligand>
        <name>Mg(2+)</name>
        <dbReference type="ChEBI" id="CHEBI:18420"/>
        <label>1</label>
    </ligand>
</feature>
<feature type="binding site" evidence="1">
    <location>
        <position position="71"/>
    </location>
    <ligand>
        <name>Mg(2+)</name>
        <dbReference type="ChEBI" id="CHEBI:18420"/>
        <label>2</label>
    </ligand>
</feature>
<feature type="binding site" evidence="1">
    <location>
        <position position="143"/>
    </location>
    <ligand>
        <name>Mg(2+)</name>
        <dbReference type="ChEBI" id="CHEBI:18420"/>
        <label>1</label>
    </ligand>
</feature>
<protein>
    <recommendedName>
        <fullName evidence="1">Crossover junction endodeoxyribonuclease RuvC</fullName>
        <ecNumber evidence="1">3.1.21.10</ecNumber>
    </recommendedName>
    <alternativeName>
        <fullName evidence="1">Holliday junction nuclease RuvC</fullName>
    </alternativeName>
    <alternativeName>
        <fullName evidence="1">Holliday junction resolvase RuvC</fullName>
    </alternativeName>
</protein>
<accession>Q6FYP4</accession>
<dbReference type="EC" id="3.1.21.10" evidence="1"/>
<dbReference type="EMBL" id="BX897700">
    <property type="protein sequence ID" value="CAF26648.1"/>
    <property type="molecule type" value="Genomic_DNA"/>
</dbReference>
<dbReference type="RefSeq" id="WP_011179821.1">
    <property type="nucleotide sequence ID" value="NC_005955.1"/>
</dbReference>
<dbReference type="SMR" id="Q6FYP4"/>
<dbReference type="KEGG" id="bqu:BQ11890"/>
<dbReference type="eggNOG" id="COG0817">
    <property type="taxonomic scope" value="Bacteria"/>
</dbReference>
<dbReference type="HOGENOM" id="CLU_091257_1_0_5"/>
<dbReference type="OrthoDB" id="9805499at2"/>
<dbReference type="Proteomes" id="UP000000597">
    <property type="component" value="Chromosome"/>
</dbReference>
<dbReference type="GO" id="GO:0005737">
    <property type="term" value="C:cytoplasm"/>
    <property type="evidence" value="ECO:0007669"/>
    <property type="project" value="UniProtKB-SubCell"/>
</dbReference>
<dbReference type="GO" id="GO:0048476">
    <property type="term" value="C:Holliday junction resolvase complex"/>
    <property type="evidence" value="ECO:0007669"/>
    <property type="project" value="UniProtKB-UniRule"/>
</dbReference>
<dbReference type="GO" id="GO:0008821">
    <property type="term" value="F:crossover junction DNA endonuclease activity"/>
    <property type="evidence" value="ECO:0007669"/>
    <property type="project" value="UniProtKB-UniRule"/>
</dbReference>
<dbReference type="GO" id="GO:0003677">
    <property type="term" value="F:DNA binding"/>
    <property type="evidence" value="ECO:0007669"/>
    <property type="project" value="UniProtKB-KW"/>
</dbReference>
<dbReference type="GO" id="GO:0000287">
    <property type="term" value="F:magnesium ion binding"/>
    <property type="evidence" value="ECO:0007669"/>
    <property type="project" value="UniProtKB-UniRule"/>
</dbReference>
<dbReference type="GO" id="GO:0006310">
    <property type="term" value="P:DNA recombination"/>
    <property type="evidence" value="ECO:0007669"/>
    <property type="project" value="UniProtKB-UniRule"/>
</dbReference>
<dbReference type="GO" id="GO:0006281">
    <property type="term" value="P:DNA repair"/>
    <property type="evidence" value="ECO:0007669"/>
    <property type="project" value="UniProtKB-UniRule"/>
</dbReference>
<dbReference type="CDD" id="cd16962">
    <property type="entry name" value="RuvC"/>
    <property type="match status" value="1"/>
</dbReference>
<dbReference type="FunFam" id="3.30.420.10:FF:000002">
    <property type="entry name" value="Crossover junction endodeoxyribonuclease RuvC"/>
    <property type="match status" value="1"/>
</dbReference>
<dbReference type="Gene3D" id="3.30.420.10">
    <property type="entry name" value="Ribonuclease H-like superfamily/Ribonuclease H"/>
    <property type="match status" value="1"/>
</dbReference>
<dbReference type="HAMAP" id="MF_00034">
    <property type="entry name" value="RuvC"/>
    <property type="match status" value="1"/>
</dbReference>
<dbReference type="InterPro" id="IPR012337">
    <property type="entry name" value="RNaseH-like_sf"/>
</dbReference>
<dbReference type="InterPro" id="IPR036397">
    <property type="entry name" value="RNaseH_sf"/>
</dbReference>
<dbReference type="InterPro" id="IPR020563">
    <property type="entry name" value="X-over_junc_endoDNase_Mg_BS"/>
</dbReference>
<dbReference type="InterPro" id="IPR002176">
    <property type="entry name" value="X-over_junc_endoDNase_RuvC"/>
</dbReference>
<dbReference type="NCBIfam" id="TIGR00228">
    <property type="entry name" value="ruvC"/>
    <property type="match status" value="1"/>
</dbReference>
<dbReference type="PANTHER" id="PTHR30194">
    <property type="entry name" value="CROSSOVER JUNCTION ENDODEOXYRIBONUCLEASE RUVC"/>
    <property type="match status" value="1"/>
</dbReference>
<dbReference type="PANTHER" id="PTHR30194:SF3">
    <property type="entry name" value="CROSSOVER JUNCTION ENDODEOXYRIBONUCLEASE RUVC"/>
    <property type="match status" value="1"/>
</dbReference>
<dbReference type="Pfam" id="PF02075">
    <property type="entry name" value="RuvC"/>
    <property type="match status" value="1"/>
</dbReference>
<dbReference type="PRINTS" id="PR00696">
    <property type="entry name" value="RSOLVASERUVC"/>
</dbReference>
<dbReference type="SUPFAM" id="SSF53098">
    <property type="entry name" value="Ribonuclease H-like"/>
    <property type="match status" value="1"/>
</dbReference>
<dbReference type="PROSITE" id="PS01321">
    <property type="entry name" value="RUVC"/>
    <property type="match status" value="1"/>
</dbReference>
<proteinExistence type="inferred from homology"/>
<keyword id="KW-0963">Cytoplasm</keyword>
<keyword id="KW-0227">DNA damage</keyword>
<keyword id="KW-0233">DNA recombination</keyword>
<keyword id="KW-0234">DNA repair</keyword>
<keyword id="KW-0238">DNA-binding</keyword>
<keyword id="KW-0255">Endonuclease</keyword>
<keyword id="KW-0378">Hydrolase</keyword>
<keyword id="KW-0460">Magnesium</keyword>
<keyword id="KW-0479">Metal-binding</keyword>
<keyword id="KW-0540">Nuclease</keyword>